<proteinExistence type="evidence at transcript level"/>
<feature type="chain" id="PRO_0000307887" description="2-(3-amino-3-carboxypropyl)histidine synthase subunit 2">
    <location>
        <begin position="1"/>
        <end position="489"/>
    </location>
</feature>
<feature type="binding site" evidence="1">
    <location>
        <position position="89"/>
    </location>
    <ligand>
        <name>[4Fe-4S] cluster</name>
        <dbReference type="ChEBI" id="CHEBI:49883"/>
    </ligand>
</feature>
<feature type="binding site" evidence="1">
    <location>
        <position position="110"/>
    </location>
    <ligand>
        <name>[4Fe-4S] cluster</name>
        <dbReference type="ChEBI" id="CHEBI:49883"/>
    </ligand>
</feature>
<feature type="binding site" evidence="1">
    <location>
        <position position="341"/>
    </location>
    <ligand>
        <name>[4Fe-4S] cluster</name>
        <dbReference type="ChEBI" id="CHEBI:49883"/>
    </ligand>
</feature>
<feature type="modified residue" description="N-acetylmethionine" evidence="2">
    <location>
        <position position="1"/>
    </location>
</feature>
<feature type="modified residue" description="Phosphoserine" evidence="2">
    <location>
        <position position="7"/>
    </location>
</feature>
<feature type="modified residue" description="Phosphothreonine" evidence="2">
    <location>
        <position position="435"/>
    </location>
</feature>
<feature type="modified residue" description="Phosphoserine" evidence="2">
    <location>
        <position position="446"/>
    </location>
</feature>
<feature type="modified residue" description="Phosphoserine" evidence="2">
    <location>
        <position position="456"/>
    </location>
</feature>
<feature type="modified residue" description="Phosphothreonine" evidence="2">
    <location>
        <position position="467"/>
    </location>
</feature>
<feature type="sequence conflict" description="In Ref. 1; ABQ12916." evidence="4" ref="1">
    <original>V</original>
    <variation>A</variation>
    <location>
        <position position="422"/>
    </location>
</feature>
<organism>
    <name type="scientific">Bos taurus</name>
    <name type="common">Bovine</name>
    <dbReference type="NCBI Taxonomy" id="9913"/>
    <lineage>
        <taxon>Eukaryota</taxon>
        <taxon>Metazoa</taxon>
        <taxon>Chordata</taxon>
        <taxon>Craniata</taxon>
        <taxon>Vertebrata</taxon>
        <taxon>Euteleostomi</taxon>
        <taxon>Mammalia</taxon>
        <taxon>Eutheria</taxon>
        <taxon>Laurasiatheria</taxon>
        <taxon>Artiodactyla</taxon>
        <taxon>Ruminantia</taxon>
        <taxon>Pecora</taxon>
        <taxon>Bovidae</taxon>
        <taxon>Bovinae</taxon>
        <taxon>Bos</taxon>
    </lineage>
</organism>
<dbReference type="EMBL" id="BT030476">
    <property type="protein sequence ID" value="ABQ12916.1"/>
    <property type="molecule type" value="mRNA"/>
</dbReference>
<dbReference type="EMBL" id="BC123671">
    <property type="protein sequence ID" value="AAI23672.1"/>
    <property type="molecule type" value="mRNA"/>
</dbReference>
<dbReference type="RefSeq" id="NP_001071567.2">
    <property type="nucleotide sequence ID" value="NM_001078099.2"/>
</dbReference>
<dbReference type="SMR" id="Q08DM2"/>
<dbReference type="FunCoup" id="Q08DM2">
    <property type="interactions" value="3692"/>
</dbReference>
<dbReference type="STRING" id="9913.ENSBTAP00000025143"/>
<dbReference type="PaxDb" id="9913-ENSBTAP00000025143"/>
<dbReference type="GeneID" id="768224"/>
<dbReference type="KEGG" id="bta:768224"/>
<dbReference type="CTD" id="1802"/>
<dbReference type="eggNOG" id="KOG2648">
    <property type="taxonomic scope" value="Eukaryota"/>
</dbReference>
<dbReference type="HOGENOM" id="CLU_015210_0_0_1"/>
<dbReference type="InParanoid" id="Q08DM2"/>
<dbReference type="OrthoDB" id="449241at2759"/>
<dbReference type="TreeFam" id="TF313832"/>
<dbReference type="UniPathway" id="UPA00559"/>
<dbReference type="Proteomes" id="UP000009136">
    <property type="component" value="Unplaced"/>
</dbReference>
<dbReference type="GO" id="GO:0120513">
    <property type="term" value="C:2-(3-amino-3-carboxypropyl)histidine synthase complex"/>
    <property type="evidence" value="ECO:0000250"/>
    <property type="project" value="UniProtKB"/>
</dbReference>
<dbReference type="GO" id="GO:0090560">
    <property type="term" value="F:2-(3-amino-3-carboxypropyl)histidine synthase activity"/>
    <property type="evidence" value="ECO:0007669"/>
    <property type="project" value="UniProtKB-EC"/>
</dbReference>
<dbReference type="GO" id="GO:0051539">
    <property type="term" value="F:4 iron, 4 sulfur cluster binding"/>
    <property type="evidence" value="ECO:0000250"/>
    <property type="project" value="UniProtKB"/>
</dbReference>
<dbReference type="GO" id="GO:0046872">
    <property type="term" value="F:metal ion binding"/>
    <property type="evidence" value="ECO:0007669"/>
    <property type="project" value="UniProtKB-KW"/>
</dbReference>
<dbReference type="GO" id="GO:0017183">
    <property type="term" value="P:protein histidyl modification to diphthamide"/>
    <property type="evidence" value="ECO:0000250"/>
    <property type="project" value="UniProtKB"/>
</dbReference>
<dbReference type="FunFam" id="3.40.50.11840:FF:000002">
    <property type="entry name" value="2-(3-amino-3-carboxypropyl)histidine synthase subunit 2"/>
    <property type="match status" value="1"/>
</dbReference>
<dbReference type="FunFam" id="3.40.50.11860:FF:000001">
    <property type="entry name" value="2-(3-amino-3-carboxypropyl)histidine synthase subunit 2"/>
    <property type="match status" value="1"/>
</dbReference>
<dbReference type="Gene3D" id="3.40.50.11840">
    <property type="entry name" value="Diphthamide synthesis DPH1/DPH2 domain 1"/>
    <property type="match status" value="1"/>
</dbReference>
<dbReference type="Gene3D" id="3.40.50.11860">
    <property type="entry name" value="Diphthamide synthesis DPH1/DPH2 domain 3"/>
    <property type="match status" value="1"/>
</dbReference>
<dbReference type="InterPro" id="IPR010014">
    <property type="entry name" value="DHP2"/>
</dbReference>
<dbReference type="InterPro" id="IPR016435">
    <property type="entry name" value="DPH1/DPH2"/>
</dbReference>
<dbReference type="InterPro" id="IPR042263">
    <property type="entry name" value="DPH1/DPH2_1"/>
</dbReference>
<dbReference type="InterPro" id="IPR042265">
    <property type="entry name" value="DPH1/DPH2_3"/>
</dbReference>
<dbReference type="NCBIfam" id="TIGR00322">
    <property type="entry name" value="diphth2_R"/>
    <property type="match status" value="1"/>
</dbReference>
<dbReference type="NCBIfam" id="TIGR00272">
    <property type="entry name" value="DPH2"/>
    <property type="match status" value="1"/>
</dbReference>
<dbReference type="PANTHER" id="PTHR10762:SF2">
    <property type="entry name" value="2-(3-AMINO-3-CARBOXYPROPYL)HISTIDINE SYNTHASE SUBUNIT 2"/>
    <property type="match status" value="1"/>
</dbReference>
<dbReference type="PANTHER" id="PTHR10762">
    <property type="entry name" value="DIPHTHAMIDE BIOSYNTHESIS PROTEIN"/>
    <property type="match status" value="1"/>
</dbReference>
<dbReference type="Pfam" id="PF01866">
    <property type="entry name" value="Diphthamide_syn"/>
    <property type="match status" value="1"/>
</dbReference>
<dbReference type="SFLD" id="SFLDG01121">
    <property type="entry name" value="Diphthamide_biosynthesis"/>
    <property type="match status" value="1"/>
</dbReference>
<dbReference type="SFLD" id="SFLDF00408">
    <property type="entry name" value="Diphthamide_biosynthesis_famil"/>
    <property type="match status" value="1"/>
</dbReference>
<dbReference type="SFLD" id="SFLDS00032">
    <property type="entry name" value="Radical_SAM_3-amino-3-carboxyp"/>
    <property type="match status" value="1"/>
</dbReference>
<accession>Q08DM2</accession>
<accession>A5D957</accession>
<keyword id="KW-0007">Acetylation</keyword>
<keyword id="KW-0408">Iron</keyword>
<keyword id="KW-0411">Iron-sulfur</keyword>
<keyword id="KW-0479">Metal-binding</keyword>
<keyword id="KW-0597">Phosphoprotein</keyword>
<keyword id="KW-1185">Reference proteome</keyword>
<sequence length="489" mass="51795">MESTFSSPAEAALQREAGSAGLRTSLGDLDRVYELERVVGFVRDLGCQRVALQFPDQLLGDAGAVAALLEEATGSKMFILGDTAYGSCCVDVLGAEQAGAQALVHFGPACLSPPARPLPVAFVLGQRSVALELCAKAFEAQNPDPTAPVVLLSEPSCAHALEALATLLRPRYLDLLVSSPALPLPAGSFNPNPEPLERFGRRFPLAPGRCLEEYGAFYVGGSEAISDPDLDPDLSRLLLGWAPGRPFSSCCPDTGRTQDEGVRAGRLRARRRYLIERARDARVVGLLAGTLGVARHREALAHLRNLTQAAGKRSYVLALGRPTPAKLANFPEVDVFVLLACPLGTLAPQPSGSFFRPVLAPCELEAACNPAWPPPGLAPHLTHYTDLLPGSPFHVPLPPPDSELWDAPDVSLITGDLRPPPVWKPSDDPGCSALTPKPQLELAESSPAASFLSSRSWKGLQPSLGQTPVTGAVSGRRGIAIAYEDEGNS</sequence>
<name>DPH2_BOVIN</name>
<gene>
    <name type="primary">DPH2</name>
</gene>
<comment type="function">
    <text evidence="1">Required for the first step of diphthamide biosynthesis, a post-translational modification of histidine which occurs in elongation factor 2 (By similarity). DPH1 and DPH2 transfer a 3-amino-3-carboxypropyl (ACP) group from S-adenosyl-L-methionine (SAM) to a histidine residue, the reaction is assisted by a reduction system comprising DPH3 and a NADH-dependent reductase (By similarity). Facilitates the reduction of the catalytic iron-sulfur cluster found in the DPH1 subunit (By similarity).</text>
</comment>
<comment type="cofactor">
    <cofactor evidence="1">
        <name>[4Fe-4S] cluster</name>
        <dbReference type="ChEBI" id="CHEBI:49883"/>
    </cofactor>
    <text evidence="1">Binds 1 [4Fe-4S] cluster per subunit. The cluster facilitates the reduction of the catalytic iron-sulfur cluster in the DPH1 subunit.</text>
</comment>
<comment type="pathway">
    <text evidence="4">Protein modification; peptidyl-diphthamide biosynthesis.</text>
</comment>
<comment type="subunit">
    <text evidence="1 3">Component of the 2-(3-amino-3-carboxypropyl)histidine synthase complex composed of DPH1, DPH2, DPH3 and a NADH-dependent reductase (By similarity). Interacts with DPH1 (By similarity).</text>
</comment>
<comment type="similarity">
    <text evidence="4">Belongs to the DPH1/DPH2 family. DPH2 subfamily.</text>
</comment>
<protein>
    <recommendedName>
        <fullName evidence="4">2-(3-amino-3-carboxypropyl)histidine synthase subunit 2</fullName>
    </recommendedName>
    <alternativeName>
        <fullName>Diphthamide biosynthesis protein 2</fullName>
    </alternativeName>
    <alternativeName>
        <fullName evidence="4">Diphtheria toxin resistance protein 2</fullName>
    </alternativeName>
    <alternativeName>
        <fullName evidence="4">S-adenosyl-L-methionine:L-histidine 3-amino-3-carboxypropyltransferase 2</fullName>
    </alternativeName>
</protein>
<reference key="1">
    <citation type="journal article" date="2005" name="BMC Genomics">
        <title>Characterization of 954 bovine full-CDS cDNA sequences.</title>
        <authorList>
            <person name="Harhay G.P."/>
            <person name="Sonstegard T.S."/>
            <person name="Keele J.W."/>
            <person name="Heaton M.P."/>
            <person name="Clawson M.L."/>
            <person name="Snelling W.M."/>
            <person name="Wiedmann R.T."/>
            <person name="Van Tassell C.P."/>
            <person name="Smith T.P.L."/>
        </authorList>
    </citation>
    <scope>NUCLEOTIDE SEQUENCE [LARGE SCALE MRNA]</scope>
</reference>
<reference key="2">
    <citation type="submission" date="2006-09" db="EMBL/GenBank/DDBJ databases">
        <authorList>
            <consortium name="NIH - Mammalian Gene Collection (MGC) project"/>
        </authorList>
    </citation>
    <scope>NUCLEOTIDE SEQUENCE [LARGE SCALE MRNA]</scope>
    <source>
        <strain>Hereford</strain>
        <tissue>Brain cortex</tissue>
    </source>
</reference>
<evidence type="ECO:0000250" key="1">
    <source>
        <dbReference type="UniProtKB" id="P32461"/>
    </source>
</evidence>
<evidence type="ECO:0000250" key="2">
    <source>
        <dbReference type="UniProtKB" id="Q9BQC3"/>
    </source>
</evidence>
<evidence type="ECO:0000250" key="3">
    <source>
        <dbReference type="UniProtKB" id="Q9CR25"/>
    </source>
</evidence>
<evidence type="ECO:0000305" key="4"/>